<keyword id="KW-0687">Ribonucleoprotein</keyword>
<keyword id="KW-0689">Ribosomal protein</keyword>
<keyword id="KW-0694">RNA-binding</keyword>
<keyword id="KW-0699">rRNA-binding</keyword>
<evidence type="ECO:0000255" key="1">
    <source>
        <dbReference type="HAMAP-Rule" id="MF_01341"/>
    </source>
</evidence>
<evidence type="ECO:0000256" key="2">
    <source>
        <dbReference type="SAM" id="MobiDB-lite"/>
    </source>
</evidence>
<evidence type="ECO:0000305" key="3"/>
<sequence>MKLHELKAAEGSRKVRNRVGRGTSSGNGKTSGRGQKGQKARSGGGVRLGFEGGQTPLFRRIPKRGFTNINTKEYALVNLDQLNVFDDGTEVTPAILKDAGIVRAEKSGVKVLGNGELTKKLTVKAAKFSKSAEAAIIAKGGSIEVI</sequence>
<protein>
    <recommendedName>
        <fullName evidence="1">Large ribosomal subunit protein uL15</fullName>
    </recommendedName>
    <alternativeName>
        <fullName evidence="3">50S ribosomal protein L15</fullName>
    </alternativeName>
</protein>
<accession>B5XJ55</accession>
<feature type="chain" id="PRO_1000142888" description="Large ribosomal subunit protein uL15">
    <location>
        <begin position="1"/>
        <end position="146"/>
    </location>
</feature>
<feature type="region of interest" description="Disordered" evidence="2">
    <location>
        <begin position="1"/>
        <end position="51"/>
    </location>
</feature>
<feature type="compositionally biased region" description="Basic and acidic residues" evidence="2">
    <location>
        <begin position="1"/>
        <end position="13"/>
    </location>
</feature>
<feature type="compositionally biased region" description="Gly residues" evidence="2">
    <location>
        <begin position="23"/>
        <end position="35"/>
    </location>
</feature>
<feature type="compositionally biased region" description="Gly residues" evidence="2">
    <location>
        <begin position="42"/>
        <end position="51"/>
    </location>
</feature>
<proteinExistence type="inferred from homology"/>
<name>RL15_STRPZ</name>
<organism>
    <name type="scientific">Streptococcus pyogenes serotype M49 (strain NZ131)</name>
    <dbReference type="NCBI Taxonomy" id="471876"/>
    <lineage>
        <taxon>Bacteria</taxon>
        <taxon>Bacillati</taxon>
        <taxon>Bacillota</taxon>
        <taxon>Bacilli</taxon>
        <taxon>Lactobacillales</taxon>
        <taxon>Streptococcaceae</taxon>
        <taxon>Streptococcus</taxon>
    </lineage>
</organism>
<dbReference type="EMBL" id="CP000829">
    <property type="protein sequence ID" value="ACI60423.1"/>
    <property type="molecule type" value="Genomic_DNA"/>
</dbReference>
<dbReference type="SMR" id="B5XJ55"/>
<dbReference type="KEGG" id="soz:Spy49_0067"/>
<dbReference type="HOGENOM" id="CLU_055188_4_2_9"/>
<dbReference type="Proteomes" id="UP000001039">
    <property type="component" value="Chromosome"/>
</dbReference>
<dbReference type="GO" id="GO:0022625">
    <property type="term" value="C:cytosolic large ribosomal subunit"/>
    <property type="evidence" value="ECO:0007669"/>
    <property type="project" value="TreeGrafter"/>
</dbReference>
<dbReference type="GO" id="GO:0019843">
    <property type="term" value="F:rRNA binding"/>
    <property type="evidence" value="ECO:0007669"/>
    <property type="project" value="UniProtKB-UniRule"/>
</dbReference>
<dbReference type="GO" id="GO:0003735">
    <property type="term" value="F:structural constituent of ribosome"/>
    <property type="evidence" value="ECO:0007669"/>
    <property type="project" value="InterPro"/>
</dbReference>
<dbReference type="GO" id="GO:0006412">
    <property type="term" value="P:translation"/>
    <property type="evidence" value="ECO:0007669"/>
    <property type="project" value="UniProtKB-UniRule"/>
</dbReference>
<dbReference type="Gene3D" id="3.100.10.10">
    <property type="match status" value="1"/>
</dbReference>
<dbReference type="HAMAP" id="MF_01341">
    <property type="entry name" value="Ribosomal_uL15"/>
    <property type="match status" value="1"/>
</dbReference>
<dbReference type="InterPro" id="IPR030878">
    <property type="entry name" value="Ribosomal_uL15"/>
</dbReference>
<dbReference type="InterPro" id="IPR021131">
    <property type="entry name" value="Ribosomal_uL15/eL18"/>
</dbReference>
<dbReference type="InterPro" id="IPR036227">
    <property type="entry name" value="Ribosomal_uL15/eL18_sf"/>
</dbReference>
<dbReference type="InterPro" id="IPR005749">
    <property type="entry name" value="Ribosomal_uL15_bac-type"/>
</dbReference>
<dbReference type="InterPro" id="IPR001196">
    <property type="entry name" value="Ribosomal_uL15_CS"/>
</dbReference>
<dbReference type="NCBIfam" id="TIGR01071">
    <property type="entry name" value="rplO_bact"/>
    <property type="match status" value="1"/>
</dbReference>
<dbReference type="PANTHER" id="PTHR12934">
    <property type="entry name" value="50S RIBOSOMAL PROTEIN L15"/>
    <property type="match status" value="1"/>
</dbReference>
<dbReference type="PANTHER" id="PTHR12934:SF11">
    <property type="entry name" value="LARGE RIBOSOMAL SUBUNIT PROTEIN UL15M"/>
    <property type="match status" value="1"/>
</dbReference>
<dbReference type="Pfam" id="PF00828">
    <property type="entry name" value="Ribosomal_L27A"/>
    <property type="match status" value="1"/>
</dbReference>
<dbReference type="SUPFAM" id="SSF52080">
    <property type="entry name" value="Ribosomal proteins L15p and L18e"/>
    <property type="match status" value="1"/>
</dbReference>
<dbReference type="PROSITE" id="PS00475">
    <property type="entry name" value="RIBOSOMAL_L15"/>
    <property type="match status" value="1"/>
</dbReference>
<gene>
    <name evidence="1" type="primary">rplO</name>
    <name type="ordered locus">Spy49_0067</name>
</gene>
<reference key="1">
    <citation type="journal article" date="2008" name="J. Bacteriol.">
        <title>Genome sequence of a nephritogenic and highly transformable M49 strain of Streptococcus pyogenes.</title>
        <authorList>
            <person name="McShan W.M."/>
            <person name="Ferretti J.J."/>
            <person name="Karasawa T."/>
            <person name="Suvorov A.N."/>
            <person name="Lin S."/>
            <person name="Qin B."/>
            <person name="Jia H."/>
            <person name="Kenton S."/>
            <person name="Najar F."/>
            <person name="Wu H."/>
            <person name="Scott J."/>
            <person name="Roe B.A."/>
            <person name="Savic D.J."/>
        </authorList>
    </citation>
    <scope>NUCLEOTIDE SEQUENCE [LARGE SCALE GENOMIC DNA]</scope>
    <source>
        <strain>NZ131</strain>
    </source>
</reference>
<comment type="function">
    <text evidence="1">Binds to the 23S rRNA.</text>
</comment>
<comment type="subunit">
    <text evidence="1">Part of the 50S ribosomal subunit.</text>
</comment>
<comment type="similarity">
    <text evidence="1">Belongs to the universal ribosomal protein uL15 family.</text>
</comment>